<feature type="chain" id="PRO_0000270394" description="Methionine import ATP-binding protein MetN 2">
    <location>
        <begin position="1"/>
        <end position="341"/>
    </location>
</feature>
<feature type="domain" description="ABC transporter" evidence="1">
    <location>
        <begin position="2"/>
        <end position="241"/>
    </location>
</feature>
<feature type="binding site" evidence="1">
    <location>
        <begin position="38"/>
        <end position="45"/>
    </location>
    <ligand>
        <name>ATP</name>
        <dbReference type="ChEBI" id="CHEBI:30616"/>
    </ligand>
</feature>
<name>METN2_STAAS</name>
<keyword id="KW-0029">Amino-acid transport</keyword>
<keyword id="KW-0067">ATP-binding</keyword>
<keyword id="KW-1003">Cell membrane</keyword>
<keyword id="KW-0472">Membrane</keyword>
<keyword id="KW-0547">Nucleotide-binding</keyword>
<keyword id="KW-1278">Translocase</keyword>
<keyword id="KW-0813">Transport</keyword>
<accession>Q6GB18</accession>
<gene>
    <name evidence="1" type="primary">metN2</name>
    <name type="ordered locus">SAS0779</name>
</gene>
<sequence length="341" mass="38209">MIELKEVVKEYRTKNKEVLAVDHVNLSIRAGSIYGVIGFSGAGKSTLIRMFNHLEAPTSGEVIIDGDHIGQLSKNGLRAKRQKVSMIFQHFNLLWSRTVLKNIMFPLEIAGVPRRRAKQKALELVELVGLKGREKAYPSELSGGQKQRVGIARALANDPTVLLCDEATSALDPQTTDEILDLLLKIREQQNLTIVLITHEMHVIRRICDEVAVMESGKVIEQGPVTQVFENPQHTVTKRFVKDDLNDDFETSLTELEPLEKDAYIVRLVFAGSTTTEPIVSSLSTAYDIKINILEANIKNTKNGTVGFLVLHIPYISSVDFGKFEKELIERQVKMEVLRHG</sequence>
<protein>
    <recommendedName>
        <fullName evidence="1">Methionine import ATP-binding protein MetN 2</fullName>
        <ecNumber evidence="1">7.4.2.11</ecNumber>
    </recommendedName>
</protein>
<dbReference type="EC" id="7.4.2.11" evidence="1"/>
<dbReference type="EMBL" id="BX571857">
    <property type="protein sequence ID" value="CAG42553.1"/>
    <property type="molecule type" value="Genomic_DNA"/>
</dbReference>
<dbReference type="RefSeq" id="WP_000571218.1">
    <property type="nucleotide sequence ID" value="NC_002953.3"/>
</dbReference>
<dbReference type="SMR" id="Q6GB18"/>
<dbReference type="KEGG" id="sas:SAS0779"/>
<dbReference type="HOGENOM" id="CLU_000604_1_3_9"/>
<dbReference type="GO" id="GO:0005886">
    <property type="term" value="C:plasma membrane"/>
    <property type="evidence" value="ECO:0007669"/>
    <property type="project" value="UniProtKB-SubCell"/>
</dbReference>
<dbReference type="GO" id="GO:0033232">
    <property type="term" value="F:ABC-type D-methionine transporter activity"/>
    <property type="evidence" value="ECO:0007669"/>
    <property type="project" value="UniProtKB-EC"/>
</dbReference>
<dbReference type="GO" id="GO:0005524">
    <property type="term" value="F:ATP binding"/>
    <property type="evidence" value="ECO:0007669"/>
    <property type="project" value="UniProtKB-KW"/>
</dbReference>
<dbReference type="GO" id="GO:0016887">
    <property type="term" value="F:ATP hydrolysis activity"/>
    <property type="evidence" value="ECO:0007669"/>
    <property type="project" value="InterPro"/>
</dbReference>
<dbReference type="CDD" id="cd03258">
    <property type="entry name" value="ABC_MetN_methionine_transporter"/>
    <property type="match status" value="1"/>
</dbReference>
<dbReference type="FunFam" id="3.40.50.300:FF:000056">
    <property type="entry name" value="Cell division ATP-binding protein FtsE"/>
    <property type="match status" value="1"/>
</dbReference>
<dbReference type="Gene3D" id="3.30.70.260">
    <property type="match status" value="1"/>
</dbReference>
<dbReference type="Gene3D" id="3.40.50.300">
    <property type="entry name" value="P-loop containing nucleotide triphosphate hydrolases"/>
    <property type="match status" value="1"/>
</dbReference>
<dbReference type="InterPro" id="IPR003593">
    <property type="entry name" value="AAA+_ATPase"/>
</dbReference>
<dbReference type="InterPro" id="IPR003439">
    <property type="entry name" value="ABC_transporter-like_ATP-bd"/>
</dbReference>
<dbReference type="InterPro" id="IPR017871">
    <property type="entry name" value="ABC_transporter-like_CS"/>
</dbReference>
<dbReference type="InterPro" id="IPR045865">
    <property type="entry name" value="ACT-like_dom_sf"/>
</dbReference>
<dbReference type="InterPro" id="IPR041701">
    <property type="entry name" value="MetN_ABC"/>
</dbReference>
<dbReference type="InterPro" id="IPR050086">
    <property type="entry name" value="MetN_ABC_transporter-like"/>
</dbReference>
<dbReference type="InterPro" id="IPR018449">
    <property type="entry name" value="NIL_domain"/>
</dbReference>
<dbReference type="InterPro" id="IPR027417">
    <property type="entry name" value="P-loop_NTPase"/>
</dbReference>
<dbReference type="PANTHER" id="PTHR43166">
    <property type="entry name" value="AMINO ACID IMPORT ATP-BINDING PROTEIN"/>
    <property type="match status" value="1"/>
</dbReference>
<dbReference type="PANTHER" id="PTHR43166:SF36">
    <property type="entry name" value="METHIONINE IMPORT ATP-BINDING PROTEIN METN 2"/>
    <property type="match status" value="1"/>
</dbReference>
<dbReference type="Pfam" id="PF00005">
    <property type="entry name" value="ABC_tran"/>
    <property type="match status" value="1"/>
</dbReference>
<dbReference type="Pfam" id="PF09383">
    <property type="entry name" value="NIL"/>
    <property type="match status" value="1"/>
</dbReference>
<dbReference type="SMART" id="SM00382">
    <property type="entry name" value="AAA"/>
    <property type="match status" value="1"/>
</dbReference>
<dbReference type="SMART" id="SM00930">
    <property type="entry name" value="NIL"/>
    <property type="match status" value="1"/>
</dbReference>
<dbReference type="SUPFAM" id="SSF55021">
    <property type="entry name" value="ACT-like"/>
    <property type="match status" value="1"/>
</dbReference>
<dbReference type="SUPFAM" id="SSF52540">
    <property type="entry name" value="P-loop containing nucleoside triphosphate hydrolases"/>
    <property type="match status" value="1"/>
</dbReference>
<dbReference type="PROSITE" id="PS00211">
    <property type="entry name" value="ABC_TRANSPORTER_1"/>
    <property type="match status" value="1"/>
</dbReference>
<dbReference type="PROSITE" id="PS50893">
    <property type="entry name" value="ABC_TRANSPORTER_2"/>
    <property type="match status" value="1"/>
</dbReference>
<dbReference type="PROSITE" id="PS51264">
    <property type="entry name" value="METN"/>
    <property type="match status" value="1"/>
</dbReference>
<organism>
    <name type="scientific">Staphylococcus aureus (strain MSSA476)</name>
    <dbReference type="NCBI Taxonomy" id="282459"/>
    <lineage>
        <taxon>Bacteria</taxon>
        <taxon>Bacillati</taxon>
        <taxon>Bacillota</taxon>
        <taxon>Bacilli</taxon>
        <taxon>Bacillales</taxon>
        <taxon>Staphylococcaceae</taxon>
        <taxon>Staphylococcus</taxon>
    </lineage>
</organism>
<evidence type="ECO:0000255" key="1">
    <source>
        <dbReference type="HAMAP-Rule" id="MF_01719"/>
    </source>
</evidence>
<comment type="function">
    <text evidence="1">Part of the ABC transporter complex MetNIQ involved in methionine import. Responsible for energy coupling to the transport system.</text>
</comment>
<comment type="catalytic activity">
    <reaction evidence="1">
        <text>L-methionine(out) + ATP + H2O = L-methionine(in) + ADP + phosphate + H(+)</text>
        <dbReference type="Rhea" id="RHEA:29779"/>
        <dbReference type="ChEBI" id="CHEBI:15377"/>
        <dbReference type="ChEBI" id="CHEBI:15378"/>
        <dbReference type="ChEBI" id="CHEBI:30616"/>
        <dbReference type="ChEBI" id="CHEBI:43474"/>
        <dbReference type="ChEBI" id="CHEBI:57844"/>
        <dbReference type="ChEBI" id="CHEBI:456216"/>
        <dbReference type="EC" id="7.4.2.11"/>
    </reaction>
</comment>
<comment type="catalytic activity">
    <reaction evidence="1">
        <text>D-methionine(out) + ATP + H2O = D-methionine(in) + ADP + phosphate + H(+)</text>
        <dbReference type="Rhea" id="RHEA:29767"/>
        <dbReference type="ChEBI" id="CHEBI:15377"/>
        <dbReference type="ChEBI" id="CHEBI:15378"/>
        <dbReference type="ChEBI" id="CHEBI:30616"/>
        <dbReference type="ChEBI" id="CHEBI:43474"/>
        <dbReference type="ChEBI" id="CHEBI:57932"/>
        <dbReference type="ChEBI" id="CHEBI:456216"/>
        <dbReference type="EC" id="7.4.2.11"/>
    </reaction>
</comment>
<comment type="subunit">
    <text evidence="1">The complex is composed of two ATP-binding proteins (MetN), two transmembrane proteins (MetI) and a solute-binding protein (MetQ).</text>
</comment>
<comment type="subcellular location">
    <subcellularLocation>
        <location evidence="1">Cell membrane</location>
        <topology evidence="1">Peripheral membrane protein</topology>
    </subcellularLocation>
</comment>
<comment type="similarity">
    <text evidence="1">Belongs to the ABC transporter superfamily. Methionine importer (TC 3.A.1.24) family.</text>
</comment>
<reference key="1">
    <citation type="journal article" date="2004" name="Proc. Natl. Acad. Sci. U.S.A.">
        <title>Complete genomes of two clinical Staphylococcus aureus strains: evidence for the rapid evolution of virulence and drug resistance.</title>
        <authorList>
            <person name="Holden M.T.G."/>
            <person name="Feil E.J."/>
            <person name="Lindsay J.A."/>
            <person name="Peacock S.J."/>
            <person name="Day N.P.J."/>
            <person name="Enright M.C."/>
            <person name="Foster T.J."/>
            <person name="Moore C.E."/>
            <person name="Hurst L."/>
            <person name="Atkin R."/>
            <person name="Barron A."/>
            <person name="Bason N."/>
            <person name="Bentley S.D."/>
            <person name="Chillingworth C."/>
            <person name="Chillingworth T."/>
            <person name="Churcher C."/>
            <person name="Clark L."/>
            <person name="Corton C."/>
            <person name="Cronin A."/>
            <person name="Doggett J."/>
            <person name="Dowd L."/>
            <person name="Feltwell T."/>
            <person name="Hance Z."/>
            <person name="Harris B."/>
            <person name="Hauser H."/>
            <person name="Holroyd S."/>
            <person name="Jagels K."/>
            <person name="James K.D."/>
            <person name="Lennard N."/>
            <person name="Line A."/>
            <person name="Mayes R."/>
            <person name="Moule S."/>
            <person name="Mungall K."/>
            <person name="Ormond D."/>
            <person name="Quail M.A."/>
            <person name="Rabbinowitsch E."/>
            <person name="Rutherford K.M."/>
            <person name="Sanders M."/>
            <person name="Sharp S."/>
            <person name="Simmonds M."/>
            <person name="Stevens K."/>
            <person name="Whitehead S."/>
            <person name="Barrell B.G."/>
            <person name="Spratt B.G."/>
            <person name="Parkhill J."/>
        </authorList>
    </citation>
    <scope>NUCLEOTIDE SEQUENCE [LARGE SCALE GENOMIC DNA]</scope>
    <source>
        <strain>MSSA476</strain>
    </source>
</reference>
<proteinExistence type="inferred from homology"/>